<evidence type="ECO:0000256" key="1">
    <source>
        <dbReference type="SAM" id="MobiDB-lite"/>
    </source>
</evidence>
<evidence type="ECO:0000269" key="2">
    <source>
    </source>
</evidence>
<accession>P25370</accession>
<accession>D6VQX9</accession>
<proteinExistence type="predicted"/>
<keyword id="KW-1185">Reference proteome</keyword>
<organism>
    <name type="scientific">Saccharomyces cerevisiae (strain ATCC 204508 / S288c)</name>
    <name type="common">Baker's yeast</name>
    <dbReference type="NCBI Taxonomy" id="559292"/>
    <lineage>
        <taxon>Eukaryota</taxon>
        <taxon>Fungi</taxon>
        <taxon>Dikarya</taxon>
        <taxon>Ascomycota</taxon>
        <taxon>Saccharomycotina</taxon>
        <taxon>Saccharomycetes</taxon>
        <taxon>Saccharomycetales</taxon>
        <taxon>Saccharomycetaceae</taxon>
        <taxon>Saccharomyces</taxon>
    </lineage>
</organism>
<gene>
    <name type="primary">GFD2</name>
    <name type="ordered locus">YCL036W</name>
    <name type="ORF">YCL187</name>
    <name type="ORF">YCL36W</name>
</gene>
<dbReference type="EMBL" id="X59720">
    <property type="protein sequence ID" value="CAA42380.1"/>
    <property type="molecule type" value="Genomic_DNA"/>
</dbReference>
<dbReference type="EMBL" id="BK006937">
    <property type="protein sequence ID" value="DAA07448.1"/>
    <property type="molecule type" value="Genomic_DNA"/>
</dbReference>
<dbReference type="PIR" id="S17477">
    <property type="entry name" value="S17477"/>
</dbReference>
<dbReference type="RefSeq" id="NP_009894.1">
    <property type="nucleotide sequence ID" value="NM_001178681.1"/>
</dbReference>
<dbReference type="BioGRID" id="30947">
    <property type="interactions" value="101"/>
</dbReference>
<dbReference type="DIP" id="DIP-2955N"/>
<dbReference type="FunCoup" id="P25370">
    <property type="interactions" value="41"/>
</dbReference>
<dbReference type="MINT" id="P25370"/>
<dbReference type="STRING" id="4932.YCL036W"/>
<dbReference type="iPTMnet" id="P25370"/>
<dbReference type="PaxDb" id="4932-YCL036W"/>
<dbReference type="PeptideAtlas" id="P25370"/>
<dbReference type="EnsemblFungi" id="YCL036W_mRNA">
    <property type="protein sequence ID" value="YCL036W"/>
    <property type="gene ID" value="YCL036W"/>
</dbReference>
<dbReference type="GeneID" id="850321"/>
<dbReference type="KEGG" id="sce:YCL036W"/>
<dbReference type="AGR" id="SGD:S000000541"/>
<dbReference type="SGD" id="S000000541">
    <property type="gene designation" value="GFD2"/>
</dbReference>
<dbReference type="VEuPathDB" id="FungiDB:YCL036W"/>
<dbReference type="eggNOG" id="ENOG502QTQR">
    <property type="taxonomic scope" value="Eukaryota"/>
</dbReference>
<dbReference type="GeneTree" id="ENSGT00940000176471"/>
<dbReference type="HOGENOM" id="CLU_029052_0_0_1"/>
<dbReference type="InParanoid" id="P25370"/>
<dbReference type="OMA" id="DRANCIC"/>
<dbReference type="OrthoDB" id="5953249at2759"/>
<dbReference type="BioCyc" id="YEAST:G3O-29295-MONOMER"/>
<dbReference type="BioGRID-ORCS" id="850321">
    <property type="hits" value="1 hit in 10 CRISPR screens"/>
</dbReference>
<dbReference type="PRO" id="PR:P25370"/>
<dbReference type="Proteomes" id="UP000002311">
    <property type="component" value="Chromosome III"/>
</dbReference>
<dbReference type="RNAct" id="P25370">
    <property type="molecule type" value="protein"/>
</dbReference>
<dbReference type="GO" id="GO:0003676">
    <property type="term" value="F:nucleic acid binding"/>
    <property type="evidence" value="ECO:0007669"/>
    <property type="project" value="InterPro"/>
</dbReference>
<dbReference type="Gene3D" id="3.30.420.10">
    <property type="entry name" value="Ribonuclease H-like superfamily/Ribonuclease H"/>
    <property type="match status" value="1"/>
</dbReference>
<dbReference type="InterPro" id="IPR040151">
    <property type="entry name" value="Gfd2/YDR514C-like"/>
</dbReference>
<dbReference type="InterPro" id="IPR048519">
    <property type="entry name" value="Gfd2/YDR514C-like_C"/>
</dbReference>
<dbReference type="InterPro" id="IPR012337">
    <property type="entry name" value="RNaseH-like_sf"/>
</dbReference>
<dbReference type="InterPro" id="IPR036397">
    <property type="entry name" value="RNaseH_sf"/>
</dbReference>
<dbReference type="PANTHER" id="PTHR28083">
    <property type="entry name" value="GOOD FOR FULL DBP5 ACTIVITY PROTEIN 2"/>
    <property type="match status" value="1"/>
</dbReference>
<dbReference type="PANTHER" id="PTHR28083:SF1">
    <property type="entry name" value="GOOD FOR FULL DBP5 ACTIVITY PROTEIN 2"/>
    <property type="match status" value="1"/>
</dbReference>
<dbReference type="Pfam" id="PF21762">
    <property type="entry name" value="DEDDh_C"/>
    <property type="match status" value="1"/>
</dbReference>
<dbReference type="SUPFAM" id="SSF53098">
    <property type="entry name" value="Ribonuclease H-like"/>
    <property type="match status" value="1"/>
</dbReference>
<reference key="1">
    <citation type="journal article" date="1991" name="Yeast">
        <title>The complete sequence of a 11,953 bp fragment from C1G on chromosome III encompasses four new open reading frames.</title>
        <authorList>
            <person name="Rad M.R."/>
            <person name="Luetzenkirchen K."/>
            <person name="Xu G."/>
            <person name="Kleinhans U."/>
            <person name="Hollenberg C.P."/>
        </authorList>
    </citation>
    <scope>NUCLEOTIDE SEQUENCE [GENOMIC DNA]</scope>
</reference>
<reference key="2">
    <citation type="journal article" date="1992" name="Nature">
        <title>The complete DNA sequence of yeast chromosome III.</title>
        <authorList>
            <person name="Oliver S.G."/>
            <person name="van der Aart Q.J.M."/>
            <person name="Agostoni-Carbone M.L."/>
            <person name="Aigle M."/>
            <person name="Alberghina L."/>
            <person name="Alexandraki D."/>
            <person name="Antoine G."/>
            <person name="Anwar R."/>
            <person name="Ballesta J.P.G."/>
            <person name="Benit P."/>
            <person name="Berben G."/>
            <person name="Bergantino E."/>
            <person name="Biteau N."/>
            <person name="Bolle P.-A."/>
            <person name="Bolotin-Fukuhara M."/>
            <person name="Brown A."/>
            <person name="Brown A.J.P."/>
            <person name="Buhler J.-M."/>
            <person name="Carcano C."/>
            <person name="Carignani G."/>
            <person name="Cederberg H."/>
            <person name="Chanet R."/>
            <person name="Contreras R."/>
            <person name="Crouzet M."/>
            <person name="Daignan-Fornier B."/>
            <person name="Defoor E."/>
            <person name="Delgado M.D."/>
            <person name="Demolder J."/>
            <person name="Doira C."/>
            <person name="Dubois E."/>
            <person name="Dujon B."/>
            <person name="Duesterhoeft A."/>
            <person name="Erdmann D."/>
            <person name="Esteban M."/>
            <person name="Fabre F."/>
            <person name="Fairhead C."/>
            <person name="Faye G."/>
            <person name="Feldmann H."/>
            <person name="Fiers W."/>
            <person name="Francingues-Gaillard M.-C."/>
            <person name="Franco L."/>
            <person name="Frontali L."/>
            <person name="Fukuhara H."/>
            <person name="Fuller L.J."/>
            <person name="Galland P."/>
            <person name="Gent M.E."/>
            <person name="Gigot D."/>
            <person name="Gilliquet V."/>
            <person name="Glansdorff N."/>
            <person name="Goffeau A."/>
            <person name="Grenson M."/>
            <person name="Grisanti P."/>
            <person name="Grivell L.A."/>
            <person name="de Haan M."/>
            <person name="Haasemann M."/>
            <person name="Hatat D."/>
            <person name="Hoenicka J."/>
            <person name="Hegemann J.H."/>
            <person name="Herbert C.J."/>
            <person name="Hilger F."/>
            <person name="Hohmann S."/>
            <person name="Hollenberg C.P."/>
            <person name="Huse K."/>
            <person name="Iborra F."/>
            <person name="Indge K.J."/>
            <person name="Isono K."/>
            <person name="Jacq C."/>
            <person name="Jacquet M."/>
            <person name="James C.M."/>
            <person name="Jauniaux J.-C."/>
            <person name="Jia Y."/>
            <person name="Jimenez A."/>
            <person name="Kelly A."/>
            <person name="Kleinhans U."/>
            <person name="Kreisl P."/>
            <person name="Lanfranchi G."/>
            <person name="Lewis C."/>
            <person name="van der Linden C.G."/>
            <person name="Lucchini G."/>
            <person name="Lutzenkirchen K."/>
            <person name="Maat M.J."/>
            <person name="Mallet L."/>
            <person name="Mannhaupt G."/>
            <person name="Martegani E."/>
            <person name="Mathieu A."/>
            <person name="Maurer C.T.C."/>
            <person name="McConnell D."/>
            <person name="McKee R.A."/>
            <person name="Messenguy F."/>
            <person name="Mewes H.-W."/>
            <person name="Molemans F."/>
            <person name="Montague M.A."/>
            <person name="Muzi Falconi M."/>
            <person name="Navas L."/>
            <person name="Newlon C.S."/>
            <person name="Noone D."/>
            <person name="Pallier C."/>
            <person name="Panzeri L."/>
            <person name="Pearson B.M."/>
            <person name="Perea J."/>
            <person name="Philippsen P."/>
            <person name="Pierard A."/>
            <person name="Planta R.J."/>
            <person name="Plevani P."/>
            <person name="Poetsch B."/>
            <person name="Pohl F.M."/>
            <person name="Purnelle B."/>
            <person name="Ramezani Rad M."/>
            <person name="Rasmussen S.W."/>
            <person name="Raynal A."/>
            <person name="Remacha M.A."/>
            <person name="Richterich P."/>
            <person name="Roberts A.B."/>
            <person name="Rodriguez F."/>
            <person name="Sanz E."/>
            <person name="Schaaff-Gerstenschlaeger I."/>
            <person name="Scherens B."/>
            <person name="Schweitzer B."/>
            <person name="Shu Y."/>
            <person name="Skala J."/>
            <person name="Slonimski P.P."/>
            <person name="Sor F."/>
            <person name="Soustelle C."/>
            <person name="Spiegelberg R."/>
            <person name="Stateva L.I."/>
            <person name="Steensma H.Y."/>
            <person name="Steiner S."/>
            <person name="Thierry A."/>
            <person name="Thireos G."/>
            <person name="Tzermia M."/>
            <person name="Urrestarazu L.A."/>
            <person name="Valle G."/>
            <person name="Vetter I."/>
            <person name="van Vliet-Reedijk J.C."/>
            <person name="Voet M."/>
            <person name="Volckaert G."/>
            <person name="Vreken P."/>
            <person name="Wang H."/>
            <person name="Warmington J.R."/>
            <person name="von Wettstein D."/>
            <person name="Wicksteed B.L."/>
            <person name="Wilson C."/>
            <person name="Wurst H."/>
            <person name="Xu G."/>
            <person name="Yoshikawa A."/>
            <person name="Zimmermann F.K."/>
            <person name="Sgouros J.G."/>
        </authorList>
    </citation>
    <scope>NUCLEOTIDE SEQUENCE [LARGE SCALE GENOMIC DNA]</scope>
    <source>
        <strain>ATCC 204508 / S288c</strain>
    </source>
</reference>
<reference key="3">
    <citation type="journal article" date="2014" name="G3 (Bethesda)">
        <title>The reference genome sequence of Saccharomyces cerevisiae: Then and now.</title>
        <authorList>
            <person name="Engel S.R."/>
            <person name="Dietrich F.S."/>
            <person name="Fisk D.G."/>
            <person name="Binkley G."/>
            <person name="Balakrishnan R."/>
            <person name="Costanzo M.C."/>
            <person name="Dwight S.S."/>
            <person name="Hitz B.C."/>
            <person name="Karra K."/>
            <person name="Nash R.S."/>
            <person name="Weng S."/>
            <person name="Wong E.D."/>
            <person name="Lloyd P."/>
            <person name="Skrzypek M.S."/>
            <person name="Miyasato S.R."/>
            <person name="Simison M."/>
            <person name="Cherry J.M."/>
        </authorList>
    </citation>
    <scope>GENOME REANNOTATION</scope>
    <source>
        <strain>ATCC 204508 / S288c</strain>
    </source>
</reference>
<reference key="4">
    <citation type="journal article" date="2003" name="Mol. Biol. Cell">
        <title>An early function during transcription for the yeast mRNA export factor Dbp5p/Rat8p suggested by its genetic and physical interactions with transcription factor IIH components.</title>
        <authorList>
            <person name="Estruch F."/>
            <person name="Cole C.N."/>
        </authorList>
    </citation>
    <scope>IDENTIFICATION</scope>
    <scope>FUNCTION</scope>
</reference>
<sequence length="566" mass="64913">MQVQKMVRDNSNNGSDKSVHWERRNNNGAGPRYRSRSGNTGALATKLSNGTLSVRGLVKDRTGSGKIAGCVEAFLDARTQLNTPWDRAKCNWLDQIDYYVQLRKTAFSKELDQLRKPMIDAYVAEMRQKFDASYGQSRAQLEAKLAQVDSEWHMVHGDVHAKLEKLVEERRFLKRLSDTIVPPRSKRSQRLSPLTKEDRANCICPQPKGMSDTAWFEAIQKKMLGMNGTIKLLETEQKLLADEKNSVRKTFWPMVEAHSRSNEFAYLEKCIRLMASQRAICFCLDIEAFETNQNVITEIGISIYDPRENMVPSMVPITKNYHLIIEESLELRNQKWVCDYKDCYLLGESYVLSLKECVHFIQSLINYYLVPVTEEDKTWSRAFVGHHVSGDLKWLETIGVKFPGRGYEGHLDHTLLLAETPGDLDVFILDTEQFYRKSYGEKGSSLGKILRLFEIPHAFLHNAGNDAYYTLHLFMKFCDVNFRKISGMDDVLKVMGQVKVWGERDVREPKVVPMSYAISIEEAVKNRTYRKGVKSSRKERVCQTEFGGLTYFGTAKDAFTSTLPTH</sequence>
<name>GFD2_YEAST</name>
<protein>
    <recommendedName>
        <fullName>Good for full DBP5 activity protein 2</fullName>
    </recommendedName>
</protein>
<feature type="chain" id="PRO_0000202543" description="Good for full DBP5 activity protein 2">
    <location>
        <begin position="1"/>
        <end position="566"/>
    </location>
</feature>
<feature type="region of interest" description="Disordered" evidence="1">
    <location>
        <begin position="1"/>
        <end position="41"/>
    </location>
</feature>
<feature type="compositionally biased region" description="Polar residues" evidence="1">
    <location>
        <begin position="1"/>
        <end position="16"/>
    </location>
</feature>
<comment type="function">
    <text evidence="2">High-copy suppressor of DBP5 mutation.</text>
</comment>